<accession>B7GU49</accession>
<accession>E8MLZ7</accession>
<proteinExistence type="inferred from homology"/>
<feature type="chain" id="PRO_1000134617" description="Small ribosomal subunit protein uS12">
    <location>
        <begin position="1"/>
        <end position="123"/>
    </location>
</feature>
<feature type="region of interest" description="Disordered" evidence="3">
    <location>
        <begin position="1"/>
        <end position="21"/>
    </location>
</feature>
<feature type="compositionally biased region" description="Basic residues" evidence="3">
    <location>
        <begin position="9"/>
        <end position="20"/>
    </location>
</feature>
<feature type="modified residue" description="3-methylthioaspartic acid" evidence="1">
    <location>
        <position position="89"/>
    </location>
</feature>
<organism>
    <name type="scientific">Bifidobacterium longum subsp. infantis (strain ATCC 15697 / DSM 20088 / JCM 1222 / NCTC 11817 / S12)</name>
    <dbReference type="NCBI Taxonomy" id="391904"/>
    <lineage>
        <taxon>Bacteria</taxon>
        <taxon>Bacillati</taxon>
        <taxon>Actinomycetota</taxon>
        <taxon>Actinomycetes</taxon>
        <taxon>Bifidobacteriales</taxon>
        <taxon>Bifidobacteriaceae</taxon>
        <taxon>Bifidobacterium</taxon>
    </lineage>
</organism>
<name>RS12_BIFLS</name>
<protein>
    <recommendedName>
        <fullName evidence="2">Small ribosomal subunit protein uS12</fullName>
    </recommendedName>
    <alternativeName>
        <fullName evidence="4">30S ribosomal protein S12</fullName>
    </alternativeName>
</protein>
<sequence length="123" mass="13593">MPTIEQLVRKGRQAKPKKSKTLALKGSPLRRGVCTRVYTTTPRKPNSALRKVARVRLSSGIEVTAYIPGEGHNLQEHSIVLVRGGRVKDLPGVRYHIVRGALDTQGVKDRKQGRSLYGAKKAK</sequence>
<evidence type="ECO:0000250" key="1"/>
<evidence type="ECO:0000255" key="2">
    <source>
        <dbReference type="HAMAP-Rule" id="MF_00403"/>
    </source>
</evidence>
<evidence type="ECO:0000256" key="3">
    <source>
        <dbReference type="SAM" id="MobiDB-lite"/>
    </source>
</evidence>
<evidence type="ECO:0000305" key="4"/>
<reference key="1">
    <citation type="journal article" date="2008" name="Proc. Natl. Acad. Sci. U.S.A.">
        <title>The genome sequence of Bifidobacterium longum subsp. infantis reveals adaptations for milk utilization within the infant microbiome.</title>
        <authorList>
            <person name="Sela D.A."/>
            <person name="Chapman J."/>
            <person name="Adeuya A."/>
            <person name="Kim J.H."/>
            <person name="Chen F."/>
            <person name="Whitehead T.R."/>
            <person name="Lapidus A."/>
            <person name="Rokhsar D.S."/>
            <person name="Lebrilla C.B."/>
            <person name="German J.B."/>
            <person name="Price N.P."/>
            <person name="Richardson P.M."/>
            <person name="Mills D.A."/>
        </authorList>
    </citation>
    <scope>NUCLEOTIDE SEQUENCE [LARGE SCALE GENOMIC DNA]</scope>
    <source>
        <strain>ATCC 15697 / DSM 20088 / JCM 1222 / NCTC 11817 / S12</strain>
    </source>
</reference>
<reference key="2">
    <citation type="journal article" date="2011" name="Nature">
        <title>Bifidobacteria can protect from enteropathogenic infection through production of acetate.</title>
        <authorList>
            <person name="Fukuda S."/>
            <person name="Toh H."/>
            <person name="Hase K."/>
            <person name="Oshima K."/>
            <person name="Nakanishi Y."/>
            <person name="Yoshimura K."/>
            <person name="Tobe T."/>
            <person name="Clarke J.M."/>
            <person name="Topping D.L."/>
            <person name="Suzuki T."/>
            <person name="Taylor T.D."/>
            <person name="Itoh K."/>
            <person name="Kikuchi J."/>
            <person name="Morita H."/>
            <person name="Hattori M."/>
            <person name="Ohno H."/>
        </authorList>
    </citation>
    <scope>NUCLEOTIDE SEQUENCE [LARGE SCALE GENOMIC DNA]</scope>
    <source>
        <strain>ATCC 15697 / DSM 20088 / JCM 1222 / NCTC 11817 / S12</strain>
    </source>
</reference>
<gene>
    <name evidence="2" type="primary">rpsL</name>
    <name type="ordered locus">Blon_1925</name>
    <name type="ordered locus">BLIJ_1996</name>
</gene>
<keyword id="KW-0488">Methylation</keyword>
<keyword id="KW-0687">Ribonucleoprotein</keyword>
<keyword id="KW-0689">Ribosomal protein</keyword>
<keyword id="KW-0694">RNA-binding</keyword>
<keyword id="KW-0699">rRNA-binding</keyword>
<keyword id="KW-0820">tRNA-binding</keyword>
<dbReference type="EMBL" id="CP001095">
    <property type="protein sequence ID" value="ACJ52995.1"/>
    <property type="molecule type" value="Genomic_DNA"/>
</dbReference>
<dbReference type="EMBL" id="AP010889">
    <property type="protein sequence ID" value="BAJ69574.1"/>
    <property type="molecule type" value="Genomic_DNA"/>
</dbReference>
<dbReference type="RefSeq" id="WP_003815498.1">
    <property type="nucleotide sequence ID" value="NZ_JDTT01000057.1"/>
</dbReference>
<dbReference type="SMR" id="B7GU49"/>
<dbReference type="KEGG" id="bln:Blon_1925"/>
<dbReference type="KEGG" id="blon:BLIJ_1996"/>
<dbReference type="PATRIC" id="fig|391904.8.peg.2003"/>
<dbReference type="HOGENOM" id="CLU_104295_1_2_11"/>
<dbReference type="Proteomes" id="UP000001360">
    <property type="component" value="Chromosome"/>
</dbReference>
<dbReference type="GO" id="GO:0015935">
    <property type="term" value="C:small ribosomal subunit"/>
    <property type="evidence" value="ECO:0007669"/>
    <property type="project" value="InterPro"/>
</dbReference>
<dbReference type="GO" id="GO:0019843">
    <property type="term" value="F:rRNA binding"/>
    <property type="evidence" value="ECO:0007669"/>
    <property type="project" value="UniProtKB-UniRule"/>
</dbReference>
<dbReference type="GO" id="GO:0003735">
    <property type="term" value="F:structural constituent of ribosome"/>
    <property type="evidence" value="ECO:0007669"/>
    <property type="project" value="InterPro"/>
</dbReference>
<dbReference type="GO" id="GO:0000049">
    <property type="term" value="F:tRNA binding"/>
    <property type="evidence" value="ECO:0007669"/>
    <property type="project" value="UniProtKB-UniRule"/>
</dbReference>
<dbReference type="GO" id="GO:0006412">
    <property type="term" value="P:translation"/>
    <property type="evidence" value="ECO:0007669"/>
    <property type="project" value="UniProtKB-UniRule"/>
</dbReference>
<dbReference type="CDD" id="cd03368">
    <property type="entry name" value="Ribosomal_S12"/>
    <property type="match status" value="1"/>
</dbReference>
<dbReference type="FunFam" id="2.40.50.140:FF:000001">
    <property type="entry name" value="30S ribosomal protein S12"/>
    <property type="match status" value="1"/>
</dbReference>
<dbReference type="Gene3D" id="2.40.50.140">
    <property type="entry name" value="Nucleic acid-binding proteins"/>
    <property type="match status" value="1"/>
</dbReference>
<dbReference type="HAMAP" id="MF_00403_B">
    <property type="entry name" value="Ribosomal_uS12_B"/>
    <property type="match status" value="1"/>
</dbReference>
<dbReference type="InterPro" id="IPR012340">
    <property type="entry name" value="NA-bd_OB-fold"/>
</dbReference>
<dbReference type="InterPro" id="IPR006032">
    <property type="entry name" value="Ribosomal_uS12"/>
</dbReference>
<dbReference type="InterPro" id="IPR005679">
    <property type="entry name" value="Ribosomal_uS12_bac"/>
</dbReference>
<dbReference type="NCBIfam" id="TIGR00981">
    <property type="entry name" value="rpsL_bact"/>
    <property type="match status" value="1"/>
</dbReference>
<dbReference type="PANTHER" id="PTHR11652">
    <property type="entry name" value="30S RIBOSOMAL PROTEIN S12 FAMILY MEMBER"/>
    <property type="match status" value="1"/>
</dbReference>
<dbReference type="Pfam" id="PF00164">
    <property type="entry name" value="Ribosom_S12_S23"/>
    <property type="match status" value="1"/>
</dbReference>
<dbReference type="PIRSF" id="PIRSF002133">
    <property type="entry name" value="Ribosomal_S12/S23"/>
    <property type="match status" value="1"/>
</dbReference>
<dbReference type="PRINTS" id="PR01034">
    <property type="entry name" value="RIBOSOMALS12"/>
</dbReference>
<dbReference type="SUPFAM" id="SSF50249">
    <property type="entry name" value="Nucleic acid-binding proteins"/>
    <property type="match status" value="1"/>
</dbReference>
<dbReference type="PROSITE" id="PS00055">
    <property type="entry name" value="RIBOSOMAL_S12"/>
    <property type="match status" value="1"/>
</dbReference>
<comment type="function">
    <text evidence="2">With S4 and S5 plays an important role in translational accuracy.</text>
</comment>
<comment type="function">
    <text evidence="2">Interacts with and stabilizes bases of the 16S rRNA that are involved in tRNA selection in the A site and with the mRNA backbone. Located at the interface of the 30S and 50S subunits, it traverses the body of the 30S subunit contacting proteins on the other side and probably holding the rRNA structure together. The combined cluster of proteins S8, S12 and S17 appears to hold together the shoulder and platform of the 30S subunit.</text>
</comment>
<comment type="subunit">
    <text evidence="2">Part of the 30S ribosomal subunit. Contacts proteins S8 and S17. May interact with IF1 in the 30S initiation complex.</text>
</comment>
<comment type="similarity">
    <text evidence="2">Belongs to the universal ribosomal protein uS12 family.</text>
</comment>